<feature type="chain" id="PRO_0000163119" description="DNA-directed RNA polymerase subunit epsilon">
    <location>
        <begin position="1"/>
        <end position="69"/>
    </location>
</feature>
<keyword id="KW-0240">DNA-directed RNA polymerase</keyword>
<keyword id="KW-0548">Nucleotidyltransferase</keyword>
<keyword id="KW-1185">Reference proteome</keyword>
<keyword id="KW-0804">Transcription</keyword>
<keyword id="KW-0808">Transferase</keyword>
<accession>Q9K9I6</accession>
<reference key="1">
    <citation type="journal article" date="2000" name="Nucleic Acids Res.">
        <title>Complete genome sequence of the alkaliphilic bacterium Bacillus halodurans and genomic sequence comparison with Bacillus subtilis.</title>
        <authorList>
            <person name="Takami H."/>
            <person name="Nakasone K."/>
            <person name="Takaki Y."/>
            <person name="Maeno G."/>
            <person name="Sasaki R."/>
            <person name="Masui N."/>
            <person name="Fuji F."/>
            <person name="Hirama C."/>
            <person name="Nakamura Y."/>
            <person name="Ogasawara N."/>
            <person name="Kuhara S."/>
            <person name="Horikoshi K."/>
        </authorList>
    </citation>
    <scope>NUCLEOTIDE SEQUENCE [LARGE SCALE GENOMIC DNA]</scope>
    <source>
        <strain>ATCC BAA-125 / DSM 18197 / FERM 7344 / JCM 9153 / C-125</strain>
    </source>
</reference>
<dbReference type="EC" id="2.7.7.6" evidence="1"/>
<dbReference type="EMBL" id="BA000004">
    <property type="protein sequence ID" value="BAB06380.1"/>
    <property type="molecule type" value="Genomic_DNA"/>
</dbReference>
<dbReference type="PIR" id="E83982">
    <property type="entry name" value="E83982"/>
</dbReference>
<dbReference type="RefSeq" id="WP_010898810.1">
    <property type="nucleotide sequence ID" value="NC_002570.2"/>
</dbReference>
<dbReference type="SMR" id="Q9K9I6"/>
<dbReference type="STRING" id="272558.gene:10728559"/>
<dbReference type="KEGG" id="bha:BH2661"/>
<dbReference type="eggNOG" id="COG5503">
    <property type="taxonomic scope" value="Bacteria"/>
</dbReference>
<dbReference type="HOGENOM" id="CLU_187518_1_0_9"/>
<dbReference type="OrthoDB" id="2147503at2"/>
<dbReference type="Proteomes" id="UP000001258">
    <property type="component" value="Chromosome"/>
</dbReference>
<dbReference type="GO" id="GO:0000428">
    <property type="term" value="C:DNA-directed RNA polymerase complex"/>
    <property type="evidence" value="ECO:0007669"/>
    <property type="project" value="UniProtKB-KW"/>
</dbReference>
<dbReference type="GO" id="GO:0003677">
    <property type="term" value="F:DNA binding"/>
    <property type="evidence" value="ECO:0007669"/>
    <property type="project" value="UniProtKB-UniRule"/>
</dbReference>
<dbReference type="GO" id="GO:0003899">
    <property type="term" value="F:DNA-directed RNA polymerase activity"/>
    <property type="evidence" value="ECO:0007669"/>
    <property type="project" value="UniProtKB-UniRule"/>
</dbReference>
<dbReference type="GO" id="GO:0006351">
    <property type="term" value="P:DNA-templated transcription"/>
    <property type="evidence" value="ECO:0007669"/>
    <property type="project" value="UniProtKB-UniRule"/>
</dbReference>
<dbReference type="Gene3D" id="3.10.20.730">
    <property type="entry name" value="RNAP, epsilon subunit-like"/>
    <property type="match status" value="1"/>
</dbReference>
<dbReference type="HAMAP" id="MF_01553">
    <property type="entry name" value="RNApol_bact_RpoY"/>
    <property type="match status" value="1"/>
</dbReference>
<dbReference type="InterPro" id="IPR009907">
    <property type="entry name" value="RpoY"/>
</dbReference>
<dbReference type="NCBIfam" id="NF010188">
    <property type="entry name" value="PRK13667.1"/>
    <property type="match status" value="1"/>
</dbReference>
<dbReference type="Pfam" id="PF07288">
    <property type="entry name" value="RpoY"/>
    <property type="match status" value="1"/>
</dbReference>
<proteinExistence type="inferred from homology"/>
<gene>
    <name evidence="1" type="primary">rpoY</name>
    <name type="ordered locus">BH2661</name>
</gene>
<comment type="function">
    <text evidence="1">A non-essential component of RNA polymerase (RNAP).</text>
</comment>
<comment type="catalytic activity">
    <reaction evidence="1">
        <text>RNA(n) + a ribonucleoside 5'-triphosphate = RNA(n+1) + diphosphate</text>
        <dbReference type="Rhea" id="RHEA:21248"/>
        <dbReference type="Rhea" id="RHEA-COMP:14527"/>
        <dbReference type="Rhea" id="RHEA-COMP:17342"/>
        <dbReference type="ChEBI" id="CHEBI:33019"/>
        <dbReference type="ChEBI" id="CHEBI:61557"/>
        <dbReference type="ChEBI" id="CHEBI:140395"/>
        <dbReference type="EC" id="2.7.7.6"/>
    </reaction>
</comment>
<comment type="subunit">
    <text evidence="1">RNAP is composed of a core of 2 alpha, a beta and a beta' subunit. The core is associated with a delta subunit, and at least one of epsilon or omega. When a sigma factor is associated with the core the holoenzyme is formed, which can initiate transcription.</text>
</comment>
<comment type="similarity">
    <text evidence="1">Belongs to the RNA polymerase subunit epsilon family.</text>
</comment>
<evidence type="ECO:0000255" key="1">
    <source>
        <dbReference type="HAMAP-Rule" id="MF_01553"/>
    </source>
</evidence>
<protein>
    <recommendedName>
        <fullName evidence="1">DNA-directed RNA polymerase subunit epsilon</fullName>
        <shortName evidence="1">RNAP epsilon subunit</shortName>
        <ecNumber evidence="1">2.7.7.6</ecNumber>
    </recommendedName>
    <alternativeName>
        <fullName evidence="1">RNA polymerase epsilon subunit</fullName>
    </alternativeName>
    <alternativeName>
        <fullName evidence="1">Transcriptase subunit epsilon</fullName>
    </alternativeName>
</protein>
<sequence length="69" mass="8284">MIYKIFYQKDFDQVPVRENTDSLYVEAESEADVRKKLSEKNYNLEFITPISGEFLAYEQQKEHFTVEKL</sequence>
<organism>
    <name type="scientific">Halalkalibacterium halodurans (strain ATCC BAA-125 / DSM 18197 / FERM 7344 / JCM 9153 / C-125)</name>
    <name type="common">Bacillus halodurans</name>
    <dbReference type="NCBI Taxonomy" id="272558"/>
    <lineage>
        <taxon>Bacteria</taxon>
        <taxon>Bacillati</taxon>
        <taxon>Bacillota</taxon>
        <taxon>Bacilli</taxon>
        <taxon>Bacillales</taxon>
        <taxon>Bacillaceae</taxon>
        <taxon>Halalkalibacterium (ex Joshi et al. 2022)</taxon>
    </lineage>
</organism>
<name>RPOY_HALH5</name>